<gene>
    <name evidence="1" type="primary">accA</name>
    <name type="ordered locus">BBta_7576</name>
</gene>
<reference key="1">
    <citation type="journal article" date="2007" name="Science">
        <title>Legumes symbioses: absence of nod genes in photosynthetic bradyrhizobia.</title>
        <authorList>
            <person name="Giraud E."/>
            <person name="Moulin L."/>
            <person name="Vallenet D."/>
            <person name="Barbe V."/>
            <person name="Cytryn E."/>
            <person name="Avarre J.-C."/>
            <person name="Jaubert M."/>
            <person name="Simon D."/>
            <person name="Cartieaux F."/>
            <person name="Prin Y."/>
            <person name="Bena G."/>
            <person name="Hannibal L."/>
            <person name="Fardoux J."/>
            <person name="Kojadinovic M."/>
            <person name="Vuillet L."/>
            <person name="Lajus A."/>
            <person name="Cruveiller S."/>
            <person name="Rouy Z."/>
            <person name="Mangenot S."/>
            <person name="Segurens B."/>
            <person name="Dossat C."/>
            <person name="Franck W.L."/>
            <person name="Chang W.-S."/>
            <person name="Saunders E."/>
            <person name="Bruce D."/>
            <person name="Richardson P."/>
            <person name="Normand P."/>
            <person name="Dreyfus B."/>
            <person name="Pignol D."/>
            <person name="Stacey G."/>
            <person name="Emerich D."/>
            <person name="Vermeglio A."/>
            <person name="Medigue C."/>
            <person name="Sadowsky M."/>
        </authorList>
    </citation>
    <scope>NUCLEOTIDE SEQUENCE [LARGE SCALE GENOMIC DNA]</scope>
    <source>
        <strain>BTAi1 / ATCC BAA-1182</strain>
    </source>
</reference>
<accession>A5ETC9</accession>
<name>ACCA_BRASB</name>
<feature type="chain" id="PRO_1000062582" description="Acetyl-coenzyme A carboxylase carboxyl transferase subunit alpha">
    <location>
        <begin position="1"/>
        <end position="320"/>
    </location>
</feature>
<feature type="domain" description="CoA carboxyltransferase C-terminal" evidence="2">
    <location>
        <begin position="41"/>
        <end position="295"/>
    </location>
</feature>
<comment type="function">
    <text evidence="1">Component of the acetyl coenzyme A carboxylase (ACC) complex. First, biotin carboxylase catalyzes the carboxylation of biotin on its carrier protein (BCCP) and then the CO(2) group is transferred by the carboxyltransferase to acetyl-CoA to form malonyl-CoA.</text>
</comment>
<comment type="catalytic activity">
    <reaction evidence="1">
        <text>N(6)-carboxybiotinyl-L-lysyl-[protein] + acetyl-CoA = N(6)-biotinyl-L-lysyl-[protein] + malonyl-CoA</text>
        <dbReference type="Rhea" id="RHEA:54728"/>
        <dbReference type="Rhea" id="RHEA-COMP:10505"/>
        <dbReference type="Rhea" id="RHEA-COMP:10506"/>
        <dbReference type="ChEBI" id="CHEBI:57288"/>
        <dbReference type="ChEBI" id="CHEBI:57384"/>
        <dbReference type="ChEBI" id="CHEBI:83144"/>
        <dbReference type="ChEBI" id="CHEBI:83145"/>
        <dbReference type="EC" id="2.1.3.15"/>
    </reaction>
</comment>
<comment type="pathway">
    <text evidence="1">Lipid metabolism; malonyl-CoA biosynthesis; malonyl-CoA from acetyl-CoA: step 1/1.</text>
</comment>
<comment type="subunit">
    <text evidence="1">Acetyl-CoA carboxylase is a heterohexamer composed of biotin carboxyl carrier protein (AccB), biotin carboxylase (AccC) and two subunits each of ACCase subunit alpha (AccA) and ACCase subunit beta (AccD).</text>
</comment>
<comment type="subcellular location">
    <subcellularLocation>
        <location evidence="1">Cytoplasm</location>
    </subcellularLocation>
</comment>
<comment type="similarity">
    <text evidence="1">Belongs to the AccA family.</text>
</comment>
<protein>
    <recommendedName>
        <fullName evidence="1">Acetyl-coenzyme A carboxylase carboxyl transferase subunit alpha</fullName>
        <shortName evidence="1">ACCase subunit alpha</shortName>
        <shortName evidence="1">Acetyl-CoA carboxylase carboxyltransferase subunit alpha</shortName>
        <ecNumber evidence="1">2.1.3.15</ecNumber>
    </recommendedName>
</protein>
<sequence length="320" mass="34491">MPDPMRSYLDFEKPVAELDSKVDELRAMAAAGTDIGEEVSRIEEKAGQALADLYANLTPWQKTMVARHPQRPHFTDFVNGLITEFTPLAGDRKFGEDAALLGGFGRFRGEPICVMGQEKGATTESRLKHNFGMARPEGYRKAVRLMEMAERFGIPVLSLVDSAGAYPGIGAEERGQAEAIARSTDACLSLGVPNVAIITGEGMSGGAIALTTANRVLMLEHAIYSVISPEAASSILWRDGTKAQEAANSMKITAQDMLRFGVVDTILKEPVGGAHRDPAAMIAATGEAIAQAFDELKGLDADAIRKQRRQKFIDIGRKLS</sequence>
<keyword id="KW-0067">ATP-binding</keyword>
<keyword id="KW-0963">Cytoplasm</keyword>
<keyword id="KW-0275">Fatty acid biosynthesis</keyword>
<keyword id="KW-0276">Fatty acid metabolism</keyword>
<keyword id="KW-0444">Lipid biosynthesis</keyword>
<keyword id="KW-0443">Lipid metabolism</keyword>
<keyword id="KW-0547">Nucleotide-binding</keyword>
<keyword id="KW-1185">Reference proteome</keyword>
<keyword id="KW-0808">Transferase</keyword>
<dbReference type="EC" id="2.1.3.15" evidence="1"/>
<dbReference type="EMBL" id="CP000494">
    <property type="protein sequence ID" value="ABQ39423.1"/>
    <property type="molecule type" value="Genomic_DNA"/>
</dbReference>
<dbReference type="RefSeq" id="WP_012047314.1">
    <property type="nucleotide sequence ID" value="NC_009485.1"/>
</dbReference>
<dbReference type="SMR" id="A5ETC9"/>
<dbReference type="STRING" id="288000.BBta_7576"/>
<dbReference type="KEGG" id="bbt:BBta_7576"/>
<dbReference type="eggNOG" id="COG0825">
    <property type="taxonomic scope" value="Bacteria"/>
</dbReference>
<dbReference type="HOGENOM" id="CLU_015486_0_2_5"/>
<dbReference type="OrthoDB" id="9808023at2"/>
<dbReference type="UniPathway" id="UPA00655">
    <property type="reaction ID" value="UER00711"/>
</dbReference>
<dbReference type="Proteomes" id="UP000000246">
    <property type="component" value="Chromosome"/>
</dbReference>
<dbReference type="GO" id="GO:0009317">
    <property type="term" value="C:acetyl-CoA carboxylase complex"/>
    <property type="evidence" value="ECO:0007669"/>
    <property type="project" value="InterPro"/>
</dbReference>
<dbReference type="GO" id="GO:0003989">
    <property type="term" value="F:acetyl-CoA carboxylase activity"/>
    <property type="evidence" value="ECO:0007669"/>
    <property type="project" value="InterPro"/>
</dbReference>
<dbReference type="GO" id="GO:0005524">
    <property type="term" value="F:ATP binding"/>
    <property type="evidence" value="ECO:0007669"/>
    <property type="project" value="UniProtKB-KW"/>
</dbReference>
<dbReference type="GO" id="GO:0016743">
    <property type="term" value="F:carboxyl- or carbamoyltransferase activity"/>
    <property type="evidence" value="ECO:0007669"/>
    <property type="project" value="UniProtKB-UniRule"/>
</dbReference>
<dbReference type="GO" id="GO:0006633">
    <property type="term" value="P:fatty acid biosynthetic process"/>
    <property type="evidence" value="ECO:0007669"/>
    <property type="project" value="UniProtKB-KW"/>
</dbReference>
<dbReference type="GO" id="GO:2001295">
    <property type="term" value="P:malonyl-CoA biosynthetic process"/>
    <property type="evidence" value="ECO:0007669"/>
    <property type="project" value="UniProtKB-UniRule"/>
</dbReference>
<dbReference type="Gene3D" id="3.90.226.10">
    <property type="entry name" value="2-enoyl-CoA Hydratase, Chain A, domain 1"/>
    <property type="match status" value="1"/>
</dbReference>
<dbReference type="HAMAP" id="MF_00823">
    <property type="entry name" value="AcetylCoA_CT_alpha"/>
    <property type="match status" value="1"/>
</dbReference>
<dbReference type="InterPro" id="IPR001095">
    <property type="entry name" value="Acetyl_CoA_COase_a_su"/>
</dbReference>
<dbReference type="InterPro" id="IPR029045">
    <property type="entry name" value="ClpP/crotonase-like_dom_sf"/>
</dbReference>
<dbReference type="InterPro" id="IPR011763">
    <property type="entry name" value="COA_CT_C"/>
</dbReference>
<dbReference type="NCBIfam" id="TIGR00513">
    <property type="entry name" value="accA"/>
    <property type="match status" value="1"/>
</dbReference>
<dbReference type="NCBIfam" id="NF041504">
    <property type="entry name" value="AccA_sub"/>
    <property type="match status" value="1"/>
</dbReference>
<dbReference type="NCBIfam" id="NF004344">
    <property type="entry name" value="PRK05724.1"/>
    <property type="match status" value="1"/>
</dbReference>
<dbReference type="PANTHER" id="PTHR42853">
    <property type="entry name" value="ACETYL-COENZYME A CARBOXYLASE CARBOXYL TRANSFERASE SUBUNIT ALPHA"/>
    <property type="match status" value="1"/>
</dbReference>
<dbReference type="PANTHER" id="PTHR42853:SF3">
    <property type="entry name" value="ACETYL-COENZYME A CARBOXYLASE CARBOXYL TRANSFERASE SUBUNIT ALPHA, CHLOROPLASTIC"/>
    <property type="match status" value="1"/>
</dbReference>
<dbReference type="Pfam" id="PF03255">
    <property type="entry name" value="ACCA"/>
    <property type="match status" value="1"/>
</dbReference>
<dbReference type="PRINTS" id="PR01069">
    <property type="entry name" value="ACCCTRFRASEA"/>
</dbReference>
<dbReference type="SUPFAM" id="SSF52096">
    <property type="entry name" value="ClpP/crotonase"/>
    <property type="match status" value="1"/>
</dbReference>
<dbReference type="PROSITE" id="PS50989">
    <property type="entry name" value="COA_CT_CTER"/>
    <property type="match status" value="1"/>
</dbReference>
<proteinExistence type="inferred from homology"/>
<evidence type="ECO:0000255" key="1">
    <source>
        <dbReference type="HAMAP-Rule" id="MF_00823"/>
    </source>
</evidence>
<evidence type="ECO:0000255" key="2">
    <source>
        <dbReference type="PROSITE-ProRule" id="PRU01137"/>
    </source>
</evidence>
<organism>
    <name type="scientific">Bradyrhizobium sp. (strain BTAi1 / ATCC BAA-1182)</name>
    <dbReference type="NCBI Taxonomy" id="288000"/>
    <lineage>
        <taxon>Bacteria</taxon>
        <taxon>Pseudomonadati</taxon>
        <taxon>Pseudomonadota</taxon>
        <taxon>Alphaproteobacteria</taxon>
        <taxon>Hyphomicrobiales</taxon>
        <taxon>Nitrobacteraceae</taxon>
        <taxon>Bradyrhizobium</taxon>
    </lineage>
</organism>